<keyword id="KW-0004">4Fe-4S</keyword>
<keyword id="KW-0028">Amino-acid biosynthesis</keyword>
<keyword id="KW-0100">Branched-chain amino acid biosynthesis</keyword>
<keyword id="KW-0408">Iron</keyword>
<keyword id="KW-0411">Iron-sulfur</keyword>
<keyword id="KW-0432">Leucine biosynthesis</keyword>
<keyword id="KW-0456">Lyase</keyword>
<keyword id="KW-0479">Metal-binding</keyword>
<keyword id="KW-1185">Reference proteome</keyword>
<comment type="function">
    <text evidence="1">Catalyzes the isomerization between 2-isopropylmalate and 3-isopropylmalate, via the formation of 2-isopropylmaleate.</text>
</comment>
<comment type="catalytic activity">
    <reaction evidence="1">
        <text>(2R,3S)-3-isopropylmalate = (2S)-2-isopropylmalate</text>
        <dbReference type="Rhea" id="RHEA:32287"/>
        <dbReference type="ChEBI" id="CHEBI:1178"/>
        <dbReference type="ChEBI" id="CHEBI:35121"/>
        <dbReference type="EC" id="4.2.1.33"/>
    </reaction>
</comment>
<comment type="cofactor">
    <cofactor evidence="1">
        <name>[4Fe-4S] cluster</name>
        <dbReference type="ChEBI" id="CHEBI:49883"/>
    </cofactor>
    <text evidence="1">Binds 1 [4Fe-4S] cluster per subunit.</text>
</comment>
<comment type="pathway">
    <text evidence="1">Amino-acid biosynthesis; L-leucine biosynthesis; L-leucine from 3-methyl-2-oxobutanoate: step 2/4.</text>
</comment>
<comment type="subunit">
    <text evidence="1">Heterodimer of LeuC and LeuD.</text>
</comment>
<comment type="similarity">
    <text evidence="1">Belongs to the aconitase/IPM isomerase family. LeuC type 1 subfamily.</text>
</comment>
<gene>
    <name evidence="1" type="primary">leuC</name>
    <name type="ordered locus">Sama_0337</name>
</gene>
<proteinExistence type="inferred from homology"/>
<sequence length="470" mass="50182">MAKTLYEKVWDAHLVVEPAGEAPIIYVDRHLVHEVTSPQAFSGLKMAGRPLRAVEKTFATMDHNTSTKSASLTALSPMARTQVETLADNCRDFNVRLYDIHHPNQGIVHVMGPELGITLPGTVIVCGDSHTATHGAFGALAFGIGTSEVEHVLATQTLRQLKAKTMKIEVRGKVADGITAKDIVLAIIGKIGMDGGTGYVVEFCGEAIRDLSMEGRMTLCNMAIEMGAKAGMVAPDETTFAYLEGREFAPKGDAWQQALADWRELHTDADAVFDAEVVLEAAAIAPQLTWGTNPGQVVAIDGVVPNPADETNPVVRTSMEKALAYVDLTPGTPMTDIAINKVFIGSCTNSRIEDLRAAAAQAKGRKVASGVTAIVVPGSGQVKLQAEAEGLDKIFLEAGFEWRLPGCSMCLAMNDDRLEAGDRCASTSNRNFEGRQGRGSRTHLVSPAMAAAAAVAGHFVDIRVHRPLED</sequence>
<evidence type="ECO:0000255" key="1">
    <source>
        <dbReference type="HAMAP-Rule" id="MF_01026"/>
    </source>
</evidence>
<dbReference type="EC" id="4.2.1.33" evidence="1"/>
<dbReference type="EMBL" id="CP000507">
    <property type="protein sequence ID" value="ABL98548.1"/>
    <property type="molecule type" value="Genomic_DNA"/>
</dbReference>
<dbReference type="RefSeq" id="WP_011758458.1">
    <property type="nucleotide sequence ID" value="NC_008700.1"/>
</dbReference>
<dbReference type="SMR" id="A1S2E2"/>
<dbReference type="STRING" id="326297.Sama_0337"/>
<dbReference type="KEGG" id="saz:Sama_0337"/>
<dbReference type="eggNOG" id="COG0065">
    <property type="taxonomic scope" value="Bacteria"/>
</dbReference>
<dbReference type="HOGENOM" id="CLU_006714_3_4_6"/>
<dbReference type="OrthoDB" id="9802769at2"/>
<dbReference type="UniPathway" id="UPA00048">
    <property type="reaction ID" value="UER00071"/>
</dbReference>
<dbReference type="Proteomes" id="UP000009175">
    <property type="component" value="Chromosome"/>
</dbReference>
<dbReference type="GO" id="GO:0003861">
    <property type="term" value="F:3-isopropylmalate dehydratase activity"/>
    <property type="evidence" value="ECO:0007669"/>
    <property type="project" value="UniProtKB-UniRule"/>
</dbReference>
<dbReference type="GO" id="GO:0051539">
    <property type="term" value="F:4 iron, 4 sulfur cluster binding"/>
    <property type="evidence" value="ECO:0007669"/>
    <property type="project" value="UniProtKB-KW"/>
</dbReference>
<dbReference type="GO" id="GO:0046872">
    <property type="term" value="F:metal ion binding"/>
    <property type="evidence" value="ECO:0007669"/>
    <property type="project" value="UniProtKB-KW"/>
</dbReference>
<dbReference type="GO" id="GO:0009098">
    <property type="term" value="P:L-leucine biosynthetic process"/>
    <property type="evidence" value="ECO:0007669"/>
    <property type="project" value="UniProtKB-UniRule"/>
</dbReference>
<dbReference type="CDD" id="cd01583">
    <property type="entry name" value="IPMI"/>
    <property type="match status" value="1"/>
</dbReference>
<dbReference type="FunFam" id="3.30.499.10:FF:000006">
    <property type="entry name" value="3-isopropylmalate dehydratase large subunit"/>
    <property type="match status" value="1"/>
</dbReference>
<dbReference type="FunFam" id="3.30.499.10:FF:000007">
    <property type="entry name" value="3-isopropylmalate dehydratase large subunit"/>
    <property type="match status" value="1"/>
</dbReference>
<dbReference type="Gene3D" id="3.30.499.10">
    <property type="entry name" value="Aconitase, domain 3"/>
    <property type="match status" value="2"/>
</dbReference>
<dbReference type="HAMAP" id="MF_01026">
    <property type="entry name" value="LeuC_type1"/>
    <property type="match status" value="1"/>
</dbReference>
<dbReference type="InterPro" id="IPR004430">
    <property type="entry name" value="3-IsopropMal_deHydase_lsu"/>
</dbReference>
<dbReference type="InterPro" id="IPR015931">
    <property type="entry name" value="Acnase/IPM_dHydase_lsu_aba_1/3"/>
</dbReference>
<dbReference type="InterPro" id="IPR001030">
    <property type="entry name" value="Acoase/IPM_deHydtase_lsu_aba"/>
</dbReference>
<dbReference type="InterPro" id="IPR018136">
    <property type="entry name" value="Aconitase_4Fe-4S_BS"/>
</dbReference>
<dbReference type="InterPro" id="IPR036008">
    <property type="entry name" value="Aconitase_4Fe-4S_dom"/>
</dbReference>
<dbReference type="InterPro" id="IPR050067">
    <property type="entry name" value="IPM_dehydratase_rel_enz"/>
</dbReference>
<dbReference type="InterPro" id="IPR033941">
    <property type="entry name" value="IPMI_cat"/>
</dbReference>
<dbReference type="NCBIfam" id="TIGR00170">
    <property type="entry name" value="leuC"/>
    <property type="match status" value="1"/>
</dbReference>
<dbReference type="NCBIfam" id="NF004016">
    <property type="entry name" value="PRK05478.1"/>
    <property type="match status" value="1"/>
</dbReference>
<dbReference type="NCBIfam" id="NF009116">
    <property type="entry name" value="PRK12466.1"/>
    <property type="match status" value="1"/>
</dbReference>
<dbReference type="PANTHER" id="PTHR43822:SF9">
    <property type="entry name" value="3-ISOPROPYLMALATE DEHYDRATASE"/>
    <property type="match status" value="1"/>
</dbReference>
<dbReference type="PANTHER" id="PTHR43822">
    <property type="entry name" value="HOMOACONITASE, MITOCHONDRIAL-RELATED"/>
    <property type="match status" value="1"/>
</dbReference>
<dbReference type="Pfam" id="PF00330">
    <property type="entry name" value="Aconitase"/>
    <property type="match status" value="1"/>
</dbReference>
<dbReference type="PRINTS" id="PR00415">
    <property type="entry name" value="ACONITASE"/>
</dbReference>
<dbReference type="SUPFAM" id="SSF53732">
    <property type="entry name" value="Aconitase iron-sulfur domain"/>
    <property type="match status" value="1"/>
</dbReference>
<dbReference type="PROSITE" id="PS00450">
    <property type="entry name" value="ACONITASE_1"/>
    <property type="match status" value="1"/>
</dbReference>
<dbReference type="PROSITE" id="PS01244">
    <property type="entry name" value="ACONITASE_2"/>
    <property type="match status" value="1"/>
</dbReference>
<feature type="chain" id="PRO_1000063604" description="3-isopropylmalate dehydratase large subunit">
    <location>
        <begin position="1"/>
        <end position="470"/>
    </location>
</feature>
<feature type="binding site" evidence="1">
    <location>
        <position position="347"/>
    </location>
    <ligand>
        <name>[4Fe-4S] cluster</name>
        <dbReference type="ChEBI" id="CHEBI:49883"/>
    </ligand>
</feature>
<feature type="binding site" evidence="1">
    <location>
        <position position="407"/>
    </location>
    <ligand>
        <name>[4Fe-4S] cluster</name>
        <dbReference type="ChEBI" id="CHEBI:49883"/>
    </ligand>
</feature>
<feature type="binding site" evidence="1">
    <location>
        <position position="410"/>
    </location>
    <ligand>
        <name>[4Fe-4S] cluster</name>
        <dbReference type="ChEBI" id="CHEBI:49883"/>
    </ligand>
</feature>
<organism>
    <name type="scientific">Shewanella amazonensis (strain ATCC BAA-1098 / SB2B)</name>
    <dbReference type="NCBI Taxonomy" id="326297"/>
    <lineage>
        <taxon>Bacteria</taxon>
        <taxon>Pseudomonadati</taxon>
        <taxon>Pseudomonadota</taxon>
        <taxon>Gammaproteobacteria</taxon>
        <taxon>Alteromonadales</taxon>
        <taxon>Shewanellaceae</taxon>
        <taxon>Shewanella</taxon>
    </lineage>
</organism>
<reference key="1">
    <citation type="submission" date="2006-12" db="EMBL/GenBank/DDBJ databases">
        <title>Complete sequence of Shewanella amazonensis SB2B.</title>
        <authorList>
            <consortium name="US DOE Joint Genome Institute"/>
            <person name="Copeland A."/>
            <person name="Lucas S."/>
            <person name="Lapidus A."/>
            <person name="Barry K."/>
            <person name="Detter J.C."/>
            <person name="Glavina del Rio T."/>
            <person name="Hammon N."/>
            <person name="Israni S."/>
            <person name="Dalin E."/>
            <person name="Tice H."/>
            <person name="Pitluck S."/>
            <person name="Munk A.C."/>
            <person name="Brettin T."/>
            <person name="Bruce D."/>
            <person name="Han C."/>
            <person name="Tapia R."/>
            <person name="Gilna P."/>
            <person name="Schmutz J."/>
            <person name="Larimer F."/>
            <person name="Land M."/>
            <person name="Hauser L."/>
            <person name="Kyrpides N."/>
            <person name="Mikhailova N."/>
            <person name="Fredrickson J."/>
            <person name="Richardson P."/>
        </authorList>
    </citation>
    <scope>NUCLEOTIDE SEQUENCE [LARGE SCALE GENOMIC DNA]</scope>
    <source>
        <strain>ATCC BAA-1098 / SB2B</strain>
    </source>
</reference>
<name>LEUC_SHEAM</name>
<accession>A1S2E2</accession>
<protein>
    <recommendedName>
        <fullName evidence="1">3-isopropylmalate dehydratase large subunit</fullName>
        <ecNumber evidence="1">4.2.1.33</ecNumber>
    </recommendedName>
    <alternativeName>
        <fullName evidence="1">Alpha-IPM isomerase</fullName>
        <shortName evidence="1">IPMI</shortName>
    </alternativeName>
    <alternativeName>
        <fullName evidence="1">Isopropylmalate isomerase</fullName>
    </alternativeName>
</protein>